<gene>
    <name type="primary">GSH1-1</name>
    <name type="ordered locus">Os05g0129000</name>
    <name type="ordered locus">LOC_Os05g03820</name>
    <name type="ORF">OSJNBa0056I11.11</name>
</gene>
<evidence type="ECO:0000250" key="1"/>
<evidence type="ECO:0000255" key="2"/>
<evidence type="ECO:0000305" key="3"/>
<protein>
    <recommendedName>
        <fullName>Glutamate--cysteine ligase A, chloroplastic</fullName>
        <ecNumber>6.3.2.2</ecNumber>
    </recommendedName>
    <alternativeName>
        <fullName>Gamma-ECS A</fullName>
        <shortName>GCS A</shortName>
    </alternativeName>
    <alternativeName>
        <fullName>Gamma-glutamylcysteine synthetase A</fullName>
    </alternativeName>
</protein>
<proteinExistence type="evidence at transcript level"/>
<keyword id="KW-0067">ATP-binding</keyword>
<keyword id="KW-0150">Chloroplast</keyword>
<keyword id="KW-1015">Disulfide bond</keyword>
<keyword id="KW-0317">Glutathione biosynthesis</keyword>
<keyword id="KW-0436">Ligase</keyword>
<keyword id="KW-0547">Nucleotide-binding</keyword>
<keyword id="KW-0934">Plastid</keyword>
<keyword id="KW-1185">Reference proteome</keyword>
<keyword id="KW-0809">Transit peptide</keyword>
<reference key="1">
    <citation type="journal article" date="2005" name="Mol. Genet. Genomics">
        <title>A fine physical map of the rice chromosome 5.</title>
        <authorList>
            <person name="Cheng C.-H."/>
            <person name="Chung M.C."/>
            <person name="Liu S.-M."/>
            <person name="Chen S.-K."/>
            <person name="Kao F.Y."/>
            <person name="Lin S.-J."/>
            <person name="Hsiao S.-H."/>
            <person name="Tseng I.C."/>
            <person name="Hsing Y.-I.C."/>
            <person name="Wu H.-P."/>
            <person name="Chen C.-S."/>
            <person name="Shaw J.-F."/>
            <person name="Wu J."/>
            <person name="Matsumoto T."/>
            <person name="Sasaki T."/>
            <person name="Chen H.-C."/>
            <person name="Chow T.-Y."/>
        </authorList>
    </citation>
    <scope>NUCLEOTIDE SEQUENCE [LARGE SCALE GENOMIC DNA]</scope>
    <source>
        <strain>cv. Nipponbare</strain>
    </source>
</reference>
<reference key="2">
    <citation type="journal article" date="2005" name="Nature">
        <title>The map-based sequence of the rice genome.</title>
        <authorList>
            <consortium name="International rice genome sequencing project (IRGSP)"/>
        </authorList>
    </citation>
    <scope>NUCLEOTIDE SEQUENCE [LARGE SCALE GENOMIC DNA]</scope>
    <source>
        <strain>cv. Nipponbare</strain>
    </source>
</reference>
<reference key="3">
    <citation type="journal article" date="2008" name="Nucleic Acids Res.">
        <title>The rice annotation project database (RAP-DB): 2008 update.</title>
        <authorList>
            <consortium name="The rice annotation project (RAP)"/>
        </authorList>
    </citation>
    <scope>GENOME REANNOTATION</scope>
    <source>
        <strain>cv. Nipponbare</strain>
    </source>
</reference>
<reference key="4">
    <citation type="journal article" date="2013" name="Rice">
        <title>Improvement of the Oryza sativa Nipponbare reference genome using next generation sequence and optical map data.</title>
        <authorList>
            <person name="Kawahara Y."/>
            <person name="de la Bastide M."/>
            <person name="Hamilton J.P."/>
            <person name="Kanamori H."/>
            <person name="McCombie W.R."/>
            <person name="Ouyang S."/>
            <person name="Schwartz D.C."/>
            <person name="Tanaka T."/>
            <person name="Wu J."/>
            <person name="Zhou S."/>
            <person name="Childs K.L."/>
            <person name="Davidson R.M."/>
            <person name="Lin H."/>
            <person name="Quesada-Ocampo L."/>
            <person name="Vaillancourt B."/>
            <person name="Sakai H."/>
            <person name="Lee S.S."/>
            <person name="Kim J."/>
            <person name="Numa H."/>
            <person name="Itoh T."/>
            <person name="Buell C.R."/>
            <person name="Matsumoto T."/>
        </authorList>
    </citation>
    <scope>GENOME REANNOTATION</scope>
    <source>
        <strain>cv. Nipponbare</strain>
    </source>
</reference>
<reference key="5">
    <citation type="journal article" date="2003" name="Science">
        <title>Collection, mapping, and annotation of over 28,000 cDNA clones from japonica rice.</title>
        <authorList>
            <consortium name="The rice full-length cDNA consortium"/>
        </authorList>
    </citation>
    <scope>NUCLEOTIDE SEQUENCE [LARGE SCALE MRNA]</scope>
    <source>
        <strain>cv. Nipponbare</strain>
    </source>
</reference>
<accession>Q688Q9</accession>
<accession>B7EUG4</accession>
<organism>
    <name type="scientific">Oryza sativa subsp. japonica</name>
    <name type="common">Rice</name>
    <dbReference type="NCBI Taxonomy" id="39947"/>
    <lineage>
        <taxon>Eukaryota</taxon>
        <taxon>Viridiplantae</taxon>
        <taxon>Streptophyta</taxon>
        <taxon>Embryophyta</taxon>
        <taxon>Tracheophyta</taxon>
        <taxon>Spermatophyta</taxon>
        <taxon>Magnoliopsida</taxon>
        <taxon>Liliopsida</taxon>
        <taxon>Poales</taxon>
        <taxon>Poaceae</taxon>
        <taxon>BOP clade</taxon>
        <taxon>Oryzoideae</taxon>
        <taxon>Oryzeae</taxon>
        <taxon>Oryzinae</taxon>
        <taxon>Oryza</taxon>
        <taxon>Oryza sativa</taxon>
    </lineage>
</organism>
<feature type="transit peptide" description="Chloroplast" evidence="2">
    <location>
        <begin position="1"/>
        <end status="unknown"/>
    </location>
</feature>
<feature type="chain" id="PRO_0000333022" description="Glutamate--cysteine ligase A, chloroplastic">
    <location>
        <begin status="unknown"/>
        <end position="492"/>
    </location>
</feature>
<feature type="disulfide bond" evidence="1">
    <location>
        <begin position="156"/>
        <end position="376"/>
    </location>
</feature>
<dbReference type="EC" id="6.3.2.2"/>
<dbReference type="EMBL" id="AC130598">
    <property type="protein sequence ID" value="AAU10747.1"/>
    <property type="molecule type" value="Genomic_DNA"/>
</dbReference>
<dbReference type="EMBL" id="AP008211">
    <property type="protein sequence ID" value="BAF16455.1"/>
    <property type="molecule type" value="Genomic_DNA"/>
</dbReference>
<dbReference type="EMBL" id="AP014961">
    <property type="protein sequence ID" value="BAS92097.1"/>
    <property type="molecule type" value="Genomic_DNA"/>
</dbReference>
<dbReference type="EMBL" id="AK103315">
    <property type="protein sequence ID" value="BAG96011.1"/>
    <property type="molecule type" value="mRNA"/>
</dbReference>
<dbReference type="RefSeq" id="XP_015640661.1">
    <property type="nucleotide sequence ID" value="XM_015785175.1"/>
</dbReference>
<dbReference type="RefSeq" id="XP_015640662.1">
    <property type="nucleotide sequence ID" value="XM_015785176.1"/>
</dbReference>
<dbReference type="SMR" id="Q688Q9"/>
<dbReference type="FunCoup" id="Q688Q9">
    <property type="interactions" value="1285"/>
</dbReference>
<dbReference type="STRING" id="39947.Q688Q9"/>
<dbReference type="PaxDb" id="39947-Q688Q9"/>
<dbReference type="EnsemblPlants" id="Os05t0129000-01">
    <property type="protein sequence ID" value="Os05t0129000-01"/>
    <property type="gene ID" value="Os05g0129000"/>
</dbReference>
<dbReference type="Gramene" id="Os05t0129000-01">
    <property type="protein sequence ID" value="Os05t0129000-01"/>
    <property type="gene ID" value="Os05g0129000"/>
</dbReference>
<dbReference type="KEGG" id="dosa:Os05g0129000"/>
<dbReference type="eggNOG" id="ENOG502QVEN">
    <property type="taxonomic scope" value="Eukaryota"/>
</dbReference>
<dbReference type="HOGENOM" id="CLU_026610_0_0_1"/>
<dbReference type="InParanoid" id="Q688Q9"/>
<dbReference type="OMA" id="WADHLTT"/>
<dbReference type="OrthoDB" id="2012853at2759"/>
<dbReference type="PlantReactome" id="R-OSA-1119342">
    <property type="pathway name" value="Gamma-glutamyl cycle"/>
</dbReference>
<dbReference type="PlantReactome" id="R-OSA-1119483">
    <property type="pathway name" value="Glutathione biosynthesis"/>
</dbReference>
<dbReference type="UniPathway" id="UPA00142">
    <property type="reaction ID" value="UER00209"/>
</dbReference>
<dbReference type="Proteomes" id="UP000000763">
    <property type="component" value="Chromosome 5"/>
</dbReference>
<dbReference type="Proteomes" id="UP000059680">
    <property type="component" value="Chromosome 5"/>
</dbReference>
<dbReference type="ExpressionAtlas" id="Q688Q9">
    <property type="expression patterns" value="baseline and differential"/>
</dbReference>
<dbReference type="GO" id="GO:0009507">
    <property type="term" value="C:chloroplast"/>
    <property type="evidence" value="ECO:0007669"/>
    <property type="project" value="UniProtKB-SubCell"/>
</dbReference>
<dbReference type="GO" id="GO:0005524">
    <property type="term" value="F:ATP binding"/>
    <property type="evidence" value="ECO:0007669"/>
    <property type="project" value="UniProtKB-KW"/>
</dbReference>
<dbReference type="GO" id="GO:0004357">
    <property type="term" value="F:glutamate-cysteine ligase activity"/>
    <property type="evidence" value="ECO:0007669"/>
    <property type="project" value="UniProtKB-EC"/>
</dbReference>
<dbReference type="GO" id="GO:0006750">
    <property type="term" value="P:glutathione biosynthetic process"/>
    <property type="evidence" value="ECO:0007669"/>
    <property type="project" value="UniProtKB-UniPathway"/>
</dbReference>
<dbReference type="FunFam" id="3.30.590.20:FF:000003">
    <property type="entry name" value="Glutamate--cysteine ligase"/>
    <property type="match status" value="1"/>
</dbReference>
<dbReference type="Gene3D" id="3.30.590.20">
    <property type="match status" value="1"/>
</dbReference>
<dbReference type="InterPro" id="IPR035434">
    <property type="entry name" value="GCL_bact_plant"/>
</dbReference>
<dbReference type="InterPro" id="IPR006336">
    <property type="entry name" value="GCS2"/>
</dbReference>
<dbReference type="InterPro" id="IPR014746">
    <property type="entry name" value="Gln_synth/guanido_kin_cat_dom"/>
</dbReference>
<dbReference type="InterPro" id="IPR011556">
    <property type="entry name" value="Glut_cys_lig_pln_type"/>
</dbReference>
<dbReference type="NCBIfam" id="TIGR01436">
    <property type="entry name" value="glu_cys_lig_pln"/>
    <property type="match status" value="1"/>
</dbReference>
<dbReference type="PANTHER" id="PTHR34378">
    <property type="entry name" value="GLUTAMATE--CYSTEINE LIGASE, CHLOROPLASTIC"/>
    <property type="match status" value="1"/>
</dbReference>
<dbReference type="PANTHER" id="PTHR34378:SF1">
    <property type="entry name" value="GLUTAMATE--CYSTEINE LIGASE, CHLOROPLASTIC"/>
    <property type="match status" value="1"/>
</dbReference>
<dbReference type="Pfam" id="PF04107">
    <property type="entry name" value="GCS2"/>
    <property type="match status" value="1"/>
</dbReference>
<dbReference type="PIRSF" id="PIRSF017901">
    <property type="entry name" value="GCL"/>
    <property type="match status" value="1"/>
</dbReference>
<dbReference type="SUPFAM" id="SSF55931">
    <property type="entry name" value="Glutamine synthetase/guanido kinase"/>
    <property type="match status" value="1"/>
</dbReference>
<name>GSH1A_ORYSJ</name>
<sequence>MAVASRLAVARVAPDGGAAGRRRRRGRPVVAVPTAGRGRGGAVAASPPTEEAVQMTEPLTKEDLVAYLVSGCKPKENWRIGTEHEKFGFEVDTLRPIKYDQIRDILNGLAERFDWDKIVEENNVIGLKQGKQSISLEPGGQFELSGAPLETLHQTCAEVNSHLYQVKAVGEEMGIGFLGIGFQPKWALSDIPIMPKGRYEIMRNYMPKVGSLGLDMMFRTCTVQVNLDFSSEQDMIRKFRTGLALQPIATAIFANSPFKEGKPNGYLSLRSHIWTDTDNNRSGMLPFVFDDSFGFERYVDYALDIPMYFVYRNKKYIDCTGMSFRDFMVGKLPQAPGELPTLNDWENHLTTIFPEVRLKRYLEMRGADGGPWRRLCALPVFWVGLLYDEESLQSISDMTSDWTNEEREMLRRKVPVTGLKTPFRDGYVRDLAEEILQLSKNGLERRGYKEVGFLREVDAVISSGVTPAERLLNLYETKWQRSVDPVFQELLY</sequence>
<comment type="catalytic activity">
    <reaction>
        <text>L-cysteine + L-glutamate + ATP = gamma-L-glutamyl-L-cysteine + ADP + phosphate + H(+)</text>
        <dbReference type="Rhea" id="RHEA:13285"/>
        <dbReference type="ChEBI" id="CHEBI:15378"/>
        <dbReference type="ChEBI" id="CHEBI:29985"/>
        <dbReference type="ChEBI" id="CHEBI:30616"/>
        <dbReference type="ChEBI" id="CHEBI:35235"/>
        <dbReference type="ChEBI" id="CHEBI:43474"/>
        <dbReference type="ChEBI" id="CHEBI:58173"/>
        <dbReference type="ChEBI" id="CHEBI:456216"/>
        <dbReference type="EC" id="6.3.2.2"/>
    </reaction>
</comment>
<comment type="pathway">
    <text>Sulfur metabolism; glutathione biosynthesis; glutathione from L-cysteine and L-glutamate: step 1/2.</text>
</comment>
<comment type="subunit">
    <text evidence="1">Homodimer or monomer when oxidized or reduced, respectively.</text>
</comment>
<comment type="subcellular location">
    <subcellularLocation>
        <location evidence="1">Plastid</location>
        <location evidence="1">Chloroplast</location>
    </subcellularLocation>
</comment>
<comment type="PTM">
    <text evidence="1">The Cys-156-Cys-376 disulfide bridge is known to modulate the enzyme activity according to the redox status. The oxidized form constitutes the active enzyme (By similarity).</text>
</comment>
<comment type="similarity">
    <text evidence="3">Belongs to the carboxylate-amine ligase family. Glutamate--cysteine ligase type 2 subfamily.</text>
</comment>